<dbReference type="EMBL" id="AP006728">
    <property type="protein sequence ID" value="BAD26831.1"/>
    <property type="molecule type" value="Genomic_DNA"/>
</dbReference>
<dbReference type="EMBL" id="AP006728">
    <property type="protein sequence ID" value="BAD26860.1"/>
    <property type="molecule type" value="Genomic_DNA"/>
</dbReference>
<dbReference type="SMR" id="Q6ENC1"/>
<dbReference type="STRING" id="4536.Q6ENC1"/>
<dbReference type="Proteomes" id="UP000006591">
    <property type="component" value="Chloroplast"/>
</dbReference>
<dbReference type="GO" id="GO:0009507">
    <property type="term" value="C:chloroplast"/>
    <property type="evidence" value="ECO:0007669"/>
    <property type="project" value="UniProtKB-SubCell"/>
</dbReference>
<dbReference type="GO" id="GO:0009536">
    <property type="term" value="C:plastid"/>
    <property type="evidence" value="ECO:0000305"/>
    <property type="project" value="Gramene"/>
</dbReference>
<dbReference type="GO" id="GO:0015935">
    <property type="term" value="C:small ribosomal subunit"/>
    <property type="evidence" value="ECO:0007669"/>
    <property type="project" value="InterPro"/>
</dbReference>
<dbReference type="GO" id="GO:0019843">
    <property type="term" value="F:rRNA binding"/>
    <property type="evidence" value="ECO:0007669"/>
    <property type="project" value="UniProtKB-UniRule"/>
</dbReference>
<dbReference type="GO" id="GO:0003735">
    <property type="term" value="F:structural constituent of ribosome"/>
    <property type="evidence" value="ECO:0007669"/>
    <property type="project" value="InterPro"/>
</dbReference>
<dbReference type="GO" id="GO:0006412">
    <property type="term" value="P:translation"/>
    <property type="evidence" value="ECO:0007669"/>
    <property type="project" value="UniProtKB-UniRule"/>
</dbReference>
<dbReference type="CDD" id="cd14871">
    <property type="entry name" value="uS7_Chloroplast"/>
    <property type="match status" value="1"/>
</dbReference>
<dbReference type="FunFam" id="1.10.455.10:FF:000001">
    <property type="entry name" value="30S ribosomal protein S7"/>
    <property type="match status" value="1"/>
</dbReference>
<dbReference type="Gene3D" id="1.10.455.10">
    <property type="entry name" value="Ribosomal protein S7 domain"/>
    <property type="match status" value="1"/>
</dbReference>
<dbReference type="HAMAP" id="MF_00480_B">
    <property type="entry name" value="Ribosomal_uS7_B"/>
    <property type="match status" value="1"/>
</dbReference>
<dbReference type="InterPro" id="IPR000235">
    <property type="entry name" value="Ribosomal_uS7"/>
</dbReference>
<dbReference type="InterPro" id="IPR005717">
    <property type="entry name" value="Ribosomal_uS7_bac/org-type"/>
</dbReference>
<dbReference type="InterPro" id="IPR020606">
    <property type="entry name" value="Ribosomal_uS7_CS"/>
</dbReference>
<dbReference type="InterPro" id="IPR023798">
    <property type="entry name" value="Ribosomal_uS7_dom"/>
</dbReference>
<dbReference type="InterPro" id="IPR036823">
    <property type="entry name" value="Ribosomal_uS7_dom_sf"/>
</dbReference>
<dbReference type="NCBIfam" id="TIGR01029">
    <property type="entry name" value="rpsG_bact"/>
    <property type="match status" value="1"/>
</dbReference>
<dbReference type="PANTHER" id="PTHR11205">
    <property type="entry name" value="RIBOSOMAL PROTEIN S7"/>
    <property type="match status" value="1"/>
</dbReference>
<dbReference type="Pfam" id="PF00177">
    <property type="entry name" value="Ribosomal_S7"/>
    <property type="match status" value="1"/>
</dbReference>
<dbReference type="PIRSF" id="PIRSF002122">
    <property type="entry name" value="RPS7p_RPS7a_RPS5e_RPS7o"/>
    <property type="match status" value="1"/>
</dbReference>
<dbReference type="SUPFAM" id="SSF47973">
    <property type="entry name" value="Ribosomal protein S7"/>
    <property type="match status" value="1"/>
</dbReference>
<dbReference type="PROSITE" id="PS00052">
    <property type="entry name" value="RIBOSOMAL_S7"/>
    <property type="match status" value="1"/>
</dbReference>
<accession>Q6ENC1</accession>
<name>RR7_ORYNI</name>
<comment type="function">
    <text evidence="1">One of the primary rRNA binding proteins, it binds directly to 16S rRNA where it nucleates assembly of the head domain of the 30S subunit.</text>
</comment>
<comment type="subunit">
    <text>Part of the 30S ribosomal subunit.</text>
</comment>
<comment type="subcellular location">
    <subcellularLocation>
        <location>Plastid</location>
        <location>Chloroplast</location>
    </subcellularLocation>
</comment>
<comment type="similarity">
    <text evidence="3">Belongs to the universal ribosomal protein uS7 family.</text>
</comment>
<sequence length="156" mass="17629">MSRRGTAEKRTAKSDPIFRNRLVNMVVNRIMKDGKKSLAYQILYRAVKKIQQKTETNPLLVLRQAIRRVTPNIGVKTRRNKKGSTRKVPIEIGSKQGRALAIRWLLEASQKRPGRNMAFKLSSELVDAAKGGGGAIRKKEATHRMAEANRALAHFR</sequence>
<evidence type="ECO:0000250" key="1"/>
<evidence type="ECO:0000255" key="2">
    <source>
        <dbReference type="HAMAP-Rule" id="MF_00480"/>
    </source>
</evidence>
<evidence type="ECO:0000305" key="3"/>
<evidence type="ECO:0000312" key="4">
    <source>
        <dbReference type="Proteomes" id="UP000006591"/>
    </source>
</evidence>
<keyword id="KW-0150">Chloroplast</keyword>
<keyword id="KW-0934">Plastid</keyword>
<keyword id="KW-1185">Reference proteome</keyword>
<keyword id="KW-0687">Ribonucleoprotein</keyword>
<keyword id="KW-0689">Ribosomal protein</keyword>
<keyword id="KW-0694">RNA-binding</keyword>
<keyword id="KW-0699">rRNA-binding</keyword>
<organism>
    <name type="scientific">Oryza nivara</name>
    <name type="common">Indian wild rice</name>
    <name type="synonym">Oryza sativa f. spontanea</name>
    <dbReference type="NCBI Taxonomy" id="4536"/>
    <lineage>
        <taxon>Eukaryota</taxon>
        <taxon>Viridiplantae</taxon>
        <taxon>Streptophyta</taxon>
        <taxon>Embryophyta</taxon>
        <taxon>Tracheophyta</taxon>
        <taxon>Spermatophyta</taxon>
        <taxon>Magnoliopsida</taxon>
        <taxon>Liliopsida</taxon>
        <taxon>Poales</taxon>
        <taxon>Poaceae</taxon>
        <taxon>BOP clade</taxon>
        <taxon>Oryzoideae</taxon>
        <taxon>Oryzeae</taxon>
        <taxon>Oryzinae</taxon>
        <taxon>Oryza</taxon>
    </lineage>
</organism>
<geneLocation type="chloroplast"/>
<feature type="chain" id="PRO_0000124483" description="Small ribosomal subunit protein uS7cz/uS7cy">
    <location>
        <begin position="1"/>
        <end position="156"/>
    </location>
</feature>
<proteinExistence type="inferred from homology"/>
<protein>
    <recommendedName>
        <fullName evidence="2">Small ribosomal subunit protein uS7cz/uS7cy</fullName>
    </recommendedName>
    <alternativeName>
        <fullName>30S ribosomal protein S7, chloroplastic</fullName>
    </alternativeName>
</protein>
<gene>
    <name type="primary">rps7-A</name>
</gene>
<gene>
    <name type="primary">rps7-B</name>
</gene>
<reference key="1">
    <citation type="journal article" date="2004" name="Gene">
        <title>The complete nucleotide sequence of wild rice (Oryza nivara) chloroplast genome: first genome wide comparative sequence analysis of wild and cultivated rice.</title>
        <authorList>
            <person name="Masood M.S."/>
            <person name="Nishikawa T."/>
            <person name="Fukuoka S."/>
            <person name="Njenga P.K."/>
            <person name="Tsudzuki T."/>
            <person name="Kadowaki K."/>
        </authorList>
    </citation>
    <scope>NUCLEOTIDE SEQUENCE [LARGE SCALE GENOMIC DNA]</scope>
    <source>
        <strain evidence="4">cv. SL10</strain>
    </source>
</reference>